<reference key="1">
    <citation type="journal article" date="2003" name="Lancet">
        <title>Sequencing and analysis of the genome of the Whipple's disease bacterium Tropheryma whipplei.</title>
        <authorList>
            <person name="Bentley S.D."/>
            <person name="Maiwald M."/>
            <person name="Murphy L.D."/>
            <person name="Pallen M.J."/>
            <person name="Yeats C.A."/>
            <person name="Dover L.G."/>
            <person name="Norbertczak H.T."/>
            <person name="Besra G.S."/>
            <person name="Quail M.A."/>
            <person name="Harris D.E."/>
            <person name="von Herbay A."/>
            <person name="Goble A."/>
            <person name="Rutter S."/>
            <person name="Squares R."/>
            <person name="Squares S."/>
            <person name="Barrell B.G."/>
            <person name="Parkhill J."/>
            <person name="Relman D.A."/>
        </authorList>
    </citation>
    <scope>NUCLEOTIDE SEQUENCE [LARGE SCALE GENOMIC DNA]</scope>
    <source>
        <strain>TW08/27</strain>
    </source>
</reference>
<name>UVRB_TROW8</name>
<gene>
    <name evidence="1" type="primary">uvrB</name>
    <name type="ordered locus">TW477</name>
</gene>
<proteinExistence type="inferred from homology"/>
<protein>
    <recommendedName>
        <fullName evidence="1">UvrABC system protein B</fullName>
        <shortName evidence="1">Protein UvrB</shortName>
    </recommendedName>
    <alternativeName>
        <fullName evidence="1">Excinuclease ABC subunit B</fullName>
    </alternativeName>
</protein>
<comment type="function">
    <text evidence="1">The UvrABC repair system catalyzes the recognition and processing of DNA lesions. A damage recognition complex composed of 2 UvrA and 2 UvrB subunits scans DNA for abnormalities. Upon binding of the UvrA(2)B(2) complex to a putative damaged site, the DNA wraps around one UvrB monomer. DNA wrap is dependent on ATP binding by UvrB and probably causes local melting of the DNA helix, facilitating insertion of UvrB beta-hairpin between the DNA strands. Then UvrB probes one DNA strand for the presence of a lesion. If a lesion is found the UvrA subunits dissociate and the UvrB-DNA preincision complex is formed. This complex is subsequently bound by UvrC and the second UvrB is released. If no lesion is found, the DNA wraps around the other UvrB subunit that will check the other stand for damage.</text>
</comment>
<comment type="subunit">
    <text evidence="1">Forms a heterotetramer with UvrA during the search for lesions. Interacts with UvrC in an incision complex.</text>
</comment>
<comment type="subcellular location">
    <subcellularLocation>
        <location evidence="1">Cytoplasm</location>
    </subcellularLocation>
</comment>
<comment type="domain">
    <text evidence="1">The beta-hairpin motif is involved in DNA binding.</text>
</comment>
<comment type="similarity">
    <text evidence="1">Belongs to the UvrB family.</text>
</comment>
<accession>Q83NI7</accession>
<organism>
    <name type="scientific">Tropheryma whipplei (strain TW08/27)</name>
    <name type="common">Whipple's bacillus</name>
    <dbReference type="NCBI Taxonomy" id="218496"/>
    <lineage>
        <taxon>Bacteria</taxon>
        <taxon>Bacillati</taxon>
        <taxon>Actinomycetota</taxon>
        <taxon>Actinomycetes</taxon>
        <taxon>Micrococcales</taxon>
        <taxon>Tropherymataceae</taxon>
        <taxon>Tropheryma</taxon>
    </lineage>
</organism>
<feature type="chain" id="PRO_0000227380" description="UvrABC system protein B">
    <location>
        <begin position="1"/>
        <end position="677"/>
    </location>
</feature>
<feature type="domain" description="Helicase ATP-binding" evidence="1">
    <location>
        <begin position="31"/>
        <end position="417"/>
    </location>
</feature>
<feature type="domain" description="Helicase C-terminal" evidence="1">
    <location>
        <begin position="434"/>
        <end position="596"/>
    </location>
</feature>
<feature type="domain" description="UVR" evidence="1">
    <location>
        <begin position="629"/>
        <end position="664"/>
    </location>
</feature>
<feature type="short sequence motif" description="Beta-hairpin">
    <location>
        <begin position="97"/>
        <end position="120"/>
    </location>
</feature>
<feature type="binding site" evidence="1">
    <location>
        <begin position="44"/>
        <end position="51"/>
    </location>
    <ligand>
        <name>ATP</name>
        <dbReference type="ChEBI" id="CHEBI:30616"/>
    </ligand>
</feature>
<evidence type="ECO:0000255" key="1">
    <source>
        <dbReference type="HAMAP-Rule" id="MF_00204"/>
    </source>
</evidence>
<sequence>MYKNLHPKYFRLAAEYDPSGDQPKAIGELSDRIESGETDIVLLGATGTGKSATIAWLIEKLARPTLIIAHNKTLAAQLANEFRKFFPDNAVEYFVSYYDYYQPEAYVPKTDTFIEKDASVNSEVERLRHRATTSLLTRRDVIVVATVSCIYGLGAPSEYLKAGFRLEVGQKISQRVLLERFTQLQYNRNDVGFERGNFRVRGDTIEIIPVYEEYTVRIEMWGDEIERVLCLHPVTGNLLSEQRGVLIFPASHYVTSSENLKRAIVDIRKELQQRLRYFKRNNSLLEAQRLETRTEYDIELMEQLGFCSGIENYSRHIDGRAPGEPPFCLLDYFDDDFLTVIDESHVTVPQIGSMHAGDFSRKKALVENGFRLPSAIDNRPLCFDEFRQRVGQVIYLSATPGKYELSKSDGVVEQIIRPTGLVDPKITVKPIKGQIDDLLEEIRKRKLLSERVLVTTLTKRMAEELTDFLSEAGVNVSYLHSDIDTLHRVELLTSLRMGRIDVLVGINLLREGLDLPEVSLVAILDADKEGFLRSTTSFIQTIGRAARHVSGEVHMYADNMTESMQKSIDETNRRRRIQQDYNRKMGVTPVPIKKTVSDITEVLSRPSRKIDCTILDSLPDPKIDGKQIKSHIKSLEAKMYMAAESLMFEEAAELRDEIQSLKEKFLKPRGSGGKIRQ</sequence>
<dbReference type="EMBL" id="BX251411">
    <property type="protein sequence ID" value="CAD67144.1"/>
    <property type="molecule type" value="Genomic_DNA"/>
</dbReference>
<dbReference type="RefSeq" id="WP_011096424.1">
    <property type="nucleotide sequence ID" value="NC_004551.1"/>
</dbReference>
<dbReference type="SMR" id="Q83NI7"/>
<dbReference type="GeneID" id="67388253"/>
<dbReference type="KEGG" id="tws:TW477"/>
<dbReference type="HOGENOM" id="CLU_009621_2_1_11"/>
<dbReference type="GO" id="GO:0005737">
    <property type="term" value="C:cytoplasm"/>
    <property type="evidence" value="ECO:0007669"/>
    <property type="project" value="UniProtKB-SubCell"/>
</dbReference>
<dbReference type="GO" id="GO:0009380">
    <property type="term" value="C:excinuclease repair complex"/>
    <property type="evidence" value="ECO:0007669"/>
    <property type="project" value="InterPro"/>
</dbReference>
<dbReference type="GO" id="GO:0005524">
    <property type="term" value="F:ATP binding"/>
    <property type="evidence" value="ECO:0007669"/>
    <property type="project" value="UniProtKB-UniRule"/>
</dbReference>
<dbReference type="GO" id="GO:0016887">
    <property type="term" value="F:ATP hydrolysis activity"/>
    <property type="evidence" value="ECO:0007669"/>
    <property type="project" value="InterPro"/>
</dbReference>
<dbReference type="GO" id="GO:0003677">
    <property type="term" value="F:DNA binding"/>
    <property type="evidence" value="ECO:0007669"/>
    <property type="project" value="UniProtKB-UniRule"/>
</dbReference>
<dbReference type="GO" id="GO:0009381">
    <property type="term" value="F:excinuclease ABC activity"/>
    <property type="evidence" value="ECO:0007669"/>
    <property type="project" value="UniProtKB-UniRule"/>
</dbReference>
<dbReference type="GO" id="GO:0006289">
    <property type="term" value="P:nucleotide-excision repair"/>
    <property type="evidence" value="ECO:0007669"/>
    <property type="project" value="UniProtKB-UniRule"/>
</dbReference>
<dbReference type="GO" id="GO:0009432">
    <property type="term" value="P:SOS response"/>
    <property type="evidence" value="ECO:0007669"/>
    <property type="project" value="UniProtKB-UniRule"/>
</dbReference>
<dbReference type="CDD" id="cd17916">
    <property type="entry name" value="DEXHc_UvrB"/>
    <property type="match status" value="1"/>
</dbReference>
<dbReference type="CDD" id="cd18790">
    <property type="entry name" value="SF2_C_UvrB"/>
    <property type="match status" value="1"/>
</dbReference>
<dbReference type="Gene3D" id="3.40.50.300">
    <property type="entry name" value="P-loop containing nucleotide triphosphate hydrolases"/>
    <property type="match status" value="3"/>
</dbReference>
<dbReference type="Gene3D" id="4.10.860.10">
    <property type="entry name" value="UVR domain"/>
    <property type="match status" value="1"/>
</dbReference>
<dbReference type="HAMAP" id="MF_00204">
    <property type="entry name" value="UvrB"/>
    <property type="match status" value="1"/>
</dbReference>
<dbReference type="InterPro" id="IPR006935">
    <property type="entry name" value="Helicase/UvrB_N"/>
</dbReference>
<dbReference type="InterPro" id="IPR014001">
    <property type="entry name" value="Helicase_ATP-bd"/>
</dbReference>
<dbReference type="InterPro" id="IPR001650">
    <property type="entry name" value="Helicase_C-like"/>
</dbReference>
<dbReference type="InterPro" id="IPR027417">
    <property type="entry name" value="P-loop_NTPase"/>
</dbReference>
<dbReference type="InterPro" id="IPR001943">
    <property type="entry name" value="UVR_dom"/>
</dbReference>
<dbReference type="InterPro" id="IPR036876">
    <property type="entry name" value="UVR_dom_sf"/>
</dbReference>
<dbReference type="InterPro" id="IPR004807">
    <property type="entry name" value="UvrB"/>
</dbReference>
<dbReference type="InterPro" id="IPR041471">
    <property type="entry name" value="UvrB_inter"/>
</dbReference>
<dbReference type="InterPro" id="IPR024759">
    <property type="entry name" value="UvrB_YAD/RRR_dom"/>
</dbReference>
<dbReference type="NCBIfam" id="NF003673">
    <property type="entry name" value="PRK05298.1"/>
    <property type="match status" value="1"/>
</dbReference>
<dbReference type="NCBIfam" id="TIGR00631">
    <property type="entry name" value="uvrb"/>
    <property type="match status" value="1"/>
</dbReference>
<dbReference type="PANTHER" id="PTHR24029">
    <property type="entry name" value="UVRABC SYSTEM PROTEIN B"/>
    <property type="match status" value="1"/>
</dbReference>
<dbReference type="PANTHER" id="PTHR24029:SF0">
    <property type="entry name" value="UVRABC SYSTEM PROTEIN B"/>
    <property type="match status" value="1"/>
</dbReference>
<dbReference type="Pfam" id="PF00271">
    <property type="entry name" value="Helicase_C"/>
    <property type="match status" value="1"/>
</dbReference>
<dbReference type="Pfam" id="PF04851">
    <property type="entry name" value="ResIII"/>
    <property type="match status" value="1"/>
</dbReference>
<dbReference type="Pfam" id="PF02151">
    <property type="entry name" value="UVR"/>
    <property type="match status" value="1"/>
</dbReference>
<dbReference type="Pfam" id="PF12344">
    <property type="entry name" value="UvrB"/>
    <property type="match status" value="1"/>
</dbReference>
<dbReference type="Pfam" id="PF17757">
    <property type="entry name" value="UvrB_inter"/>
    <property type="match status" value="1"/>
</dbReference>
<dbReference type="SMART" id="SM00487">
    <property type="entry name" value="DEXDc"/>
    <property type="match status" value="1"/>
</dbReference>
<dbReference type="SMART" id="SM00490">
    <property type="entry name" value="HELICc"/>
    <property type="match status" value="1"/>
</dbReference>
<dbReference type="SUPFAM" id="SSF46600">
    <property type="entry name" value="C-terminal UvrC-binding domain of UvrB"/>
    <property type="match status" value="1"/>
</dbReference>
<dbReference type="SUPFAM" id="SSF52540">
    <property type="entry name" value="P-loop containing nucleoside triphosphate hydrolases"/>
    <property type="match status" value="2"/>
</dbReference>
<dbReference type="PROSITE" id="PS51192">
    <property type="entry name" value="HELICASE_ATP_BIND_1"/>
    <property type="match status" value="1"/>
</dbReference>
<dbReference type="PROSITE" id="PS51194">
    <property type="entry name" value="HELICASE_CTER"/>
    <property type="match status" value="1"/>
</dbReference>
<dbReference type="PROSITE" id="PS50151">
    <property type="entry name" value="UVR"/>
    <property type="match status" value="1"/>
</dbReference>
<keyword id="KW-0067">ATP-binding</keyword>
<keyword id="KW-0963">Cytoplasm</keyword>
<keyword id="KW-0227">DNA damage</keyword>
<keyword id="KW-0228">DNA excision</keyword>
<keyword id="KW-0234">DNA repair</keyword>
<keyword id="KW-0267">Excision nuclease</keyword>
<keyword id="KW-0547">Nucleotide-binding</keyword>
<keyword id="KW-0742">SOS response</keyword>